<dbReference type="EC" id="4.2.1.33" evidence="1"/>
<dbReference type="EMBL" id="AE017355">
    <property type="protein sequence ID" value="AAT63760.1"/>
    <property type="molecule type" value="Genomic_DNA"/>
</dbReference>
<dbReference type="RefSeq" id="WP_000433181.1">
    <property type="nucleotide sequence ID" value="NC_005957.1"/>
</dbReference>
<dbReference type="RefSeq" id="YP_035621.1">
    <property type="nucleotide sequence ID" value="NC_005957.1"/>
</dbReference>
<dbReference type="SMR" id="Q6HLF0"/>
<dbReference type="KEGG" id="btk:BT9727_1287"/>
<dbReference type="PATRIC" id="fig|281309.8.peg.1356"/>
<dbReference type="HOGENOM" id="CLU_081378_0_3_9"/>
<dbReference type="UniPathway" id="UPA00048">
    <property type="reaction ID" value="UER00071"/>
</dbReference>
<dbReference type="Proteomes" id="UP000001301">
    <property type="component" value="Chromosome"/>
</dbReference>
<dbReference type="GO" id="GO:0009316">
    <property type="term" value="C:3-isopropylmalate dehydratase complex"/>
    <property type="evidence" value="ECO:0007669"/>
    <property type="project" value="InterPro"/>
</dbReference>
<dbReference type="GO" id="GO:0003861">
    <property type="term" value="F:3-isopropylmalate dehydratase activity"/>
    <property type="evidence" value="ECO:0007669"/>
    <property type="project" value="UniProtKB-UniRule"/>
</dbReference>
<dbReference type="GO" id="GO:0009098">
    <property type="term" value="P:L-leucine biosynthetic process"/>
    <property type="evidence" value="ECO:0007669"/>
    <property type="project" value="UniProtKB-UniRule"/>
</dbReference>
<dbReference type="CDD" id="cd01577">
    <property type="entry name" value="IPMI_Swivel"/>
    <property type="match status" value="1"/>
</dbReference>
<dbReference type="FunFam" id="3.20.19.10:FF:000003">
    <property type="entry name" value="3-isopropylmalate dehydratase small subunit"/>
    <property type="match status" value="1"/>
</dbReference>
<dbReference type="Gene3D" id="3.20.19.10">
    <property type="entry name" value="Aconitase, domain 4"/>
    <property type="match status" value="1"/>
</dbReference>
<dbReference type="HAMAP" id="MF_01031">
    <property type="entry name" value="LeuD_type1"/>
    <property type="match status" value="1"/>
</dbReference>
<dbReference type="InterPro" id="IPR004431">
    <property type="entry name" value="3-IsopropMal_deHydase_ssu"/>
</dbReference>
<dbReference type="InterPro" id="IPR015928">
    <property type="entry name" value="Aconitase/3IPM_dehydase_swvl"/>
</dbReference>
<dbReference type="InterPro" id="IPR000573">
    <property type="entry name" value="AconitaseA/IPMdHydase_ssu_swvl"/>
</dbReference>
<dbReference type="InterPro" id="IPR033940">
    <property type="entry name" value="IPMI_Swivel"/>
</dbReference>
<dbReference type="InterPro" id="IPR050075">
    <property type="entry name" value="LeuD"/>
</dbReference>
<dbReference type="NCBIfam" id="TIGR00171">
    <property type="entry name" value="leuD"/>
    <property type="match status" value="1"/>
</dbReference>
<dbReference type="NCBIfam" id="NF002458">
    <property type="entry name" value="PRK01641.1"/>
    <property type="match status" value="1"/>
</dbReference>
<dbReference type="PANTHER" id="PTHR43345:SF5">
    <property type="entry name" value="3-ISOPROPYLMALATE DEHYDRATASE SMALL SUBUNIT"/>
    <property type="match status" value="1"/>
</dbReference>
<dbReference type="PANTHER" id="PTHR43345">
    <property type="entry name" value="3-ISOPROPYLMALATE DEHYDRATASE SMALL SUBUNIT 2-RELATED-RELATED"/>
    <property type="match status" value="1"/>
</dbReference>
<dbReference type="Pfam" id="PF00694">
    <property type="entry name" value="Aconitase_C"/>
    <property type="match status" value="1"/>
</dbReference>
<dbReference type="SUPFAM" id="SSF52016">
    <property type="entry name" value="LeuD/IlvD-like"/>
    <property type="match status" value="1"/>
</dbReference>
<accession>Q6HLF0</accession>
<name>LEUD_BACHK</name>
<keyword id="KW-0028">Amino-acid biosynthesis</keyword>
<keyword id="KW-0100">Branched-chain amino acid biosynthesis</keyword>
<keyword id="KW-0432">Leucine biosynthesis</keyword>
<keyword id="KW-0456">Lyase</keyword>
<organism>
    <name type="scientific">Bacillus thuringiensis subsp. konkukian (strain 97-27)</name>
    <dbReference type="NCBI Taxonomy" id="281309"/>
    <lineage>
        <taxon>Bacteria</taxon>
        <taxon>Bacillati</taxon>
        <taxon>Bacillota</taxon>
        <taxon>Bacilli</taxon>
        <taxon>Bacillales</taxon>
        <taxon>Bacillaceae</taxon>
        <taxon>Bacillus</taxon>
        <taxon>Bacillus cereus group</taxon>
    </lineage>
</organism>
<reference key="1">
    <citation type="journal article" date="2006" name="J. Bacteriol.">
        <title>Pathogenomic sequence analysis of Bacillus cereus and Bacillus thuringiensis isolates closely related to Bacillus anthracis.</title>
        <authorList>
            <person name="Han C.S."/>
            <person name="Xie G."/>
            <person name="Challacombe J.F."/>
            <person name="Altherr M.R."/>
            <person name="Bhotika S.S."/>
            <person name="Bruce D."/>
            <person name="Campbell C.S."/>
            <person name="Campbell M.L."/>
            <person name="Chen J."/>
            <person name="Chertkov O."/>
            <person name="Cleland C."/>
            <person name="Dimitrijevic M."/>
            <person name="Doggett N.A."/>
            <person name="Fawcett J.J."/>
            <person name="Glavina T."/>
            <person name="Goodwin L.A."/>
            <person name="Hill K.K."/>
            <person name="Hitchcock P."/>
            <person name="Jackson P.J."/>
            <person name="Keim P."/>
            <person name="Kewalramani A.R."/>
            <person name="Longmire J."/>
            <person name="Lucas S."/>
            <person name="Malfatti S."/>
            <person name="McMurry K."/>
            <person name="Meincke L.J."/>
            <person name="Misra M."/>
            <person name="Moseman B.L."/>
            <person name="Mundt M."/>
            <person name="Munk A.C."/>
            <person name="Okinaka R.T."/>
            <person name="Parson-Quintana B."/>
            <person name="Reilly L.P."/>
            <person name="Richardson P."/>
            <person name="Robinson D.L."/>
            <person name="Rubin E."/>
            <person name="Saunders E."/>
            <person name="Tapia R."/>
            <person name="Tesmer J.G."/>
            <person name="Thayer N."/>
            <person name="Thompson L.S."/>
            <person name="Tice H."/>
            <person name="Ticknor L.O."/>
            <person name="Wills P.L."/>
            <person name="Brettin T.S."/>
            <person name="Gilna P."/>
        </authorList>
    </citation>
    <scope>NUCLEOTIDE SEQUENCE [LARGE SCALE GENOMIC DNA]</scope>
    <source>
        <strain>97-27</strain>
    </source>
</reference>
<protein>
    <recommendedName>
        <fullName evidence="1">3-isopropylmalate dehydratase small subunit</fullName>
        <ecNumber evidence="1">4.2.1.33</ecNumber>
    </recommendedName>
    <alternativeName>
        <fullName evidence="1">Alpha-IPM isomerase</fullName>
        <shortName evidence="1">IPMI</shortName>
    </alternativeName>
    <alternativeName>
        <fullName evidence="1">Isopropylmalate isomerase</fullName>
    </alternativeName>
</protein>
<proteinExistence type="inferred from homology"/>
<comment type="function">
    <text evidence="1">Catalyzes the isomerization between 2-isopropylmalate and 3-isopropylmalate, via the formation of 2-isopropylmaleate.</text>
</comment>
<comment type="catalytic activity">
    <reaction evidence="1">
        <text>(2R,3S)-3-isopropylmalate = (2S)-2-isopropylmalate</text>
        <dbReference type="Rhea" id="RHEA:32287"/>
        <dbReference type="ChEBI" id="CHEBI:1178"/>
        <dbReference type="ChEBI" id="CHEBI:35121"/>
        <dbReference type="EC" id="4.2.1.33"/>
    </reaction>
</comment>
<comment type="pathway">
    <text evidence="1">Amino-acid biosynthesis; L-leucine biosynthesis; L-leucine from 3-methyl-2-oxobutanoate: step 2/4.</text>
</comment>
<comment type="subunit">
    <text evidence="1">Heterodimer of LeuC and LeuD.</text>
</comment>
<comment type="similarity">
    <text evidence="1">Belongs to the LeuD family. LeuD type 1 subfamily.</text>
</comment>
<evidence type="ECO:0000255" key="1">
    <source>
        <dbReference type="HAMAP-Rule" id="MF_01031"/>
    </source>
</evidence>
<gene>
    <name evidence="1" type="primary">leuD</name>
    <name type="ordered locus">BT9727_1287</name>
</gene>
<feature type="chain" id="PRO_0000141784" description="3-isopropylmalate dehydratase small subunit">
    <location>
        <begin position="1"/>
        <end position="193"/>
    </location>
</feature>
<sequence>MEPFRIHKGTAAVLMNDNIDTDQIIPKQYLKRIERTGFGKFLFDEWRYDNNRQENPNFPLNAPDRKGASILITGDNFGCGSSREHAPWALADYGFRVIIAGGFADIFYMNCMKNGMLPIVMDKEMREKLVKTDAREQIEVDLENEVITTSTHRFHFTIEKMWKEKLLNGLDEISITMQYEQEIKEYERRVAVY</sequence>